<evidence type="ECO:0000255" key="1">
    <source>
        <dbReference type="HAMAP-Rule" id="MF_01658"/>
    </source>
</evidence>
<comment type="function">
    <text evidence="1">Catalyzes the hydroxylation of 2-nonaprenyl-3-methyl-6-methoxy-1,4-benzoquinol during ubiquinone biosynthesis.</text>
</comment>
<comment type="catalytic activity">
    <reaction evidence="1">
        <text>a 5-methoxy-2-methyl-3-(all-trans-polyprenyl)benzene-1,4-diol + AH2 + O2 = a 3-demethylubiquinol + A + H2O</text>
        <dbReference type="Rhea" id="RHEA:50908"/>
        <dbReference type="Rhea" id="RHEA-COMP:10859"/>
        <dbReference type="Rhea" id="RHEA-COMP:10914"/>
        <dbReference type="ChEBI" id="CHEBI:13193"/>
        <dbReference type="ChEBI" id="CHEBI:15377"/>
        <dbReference type="ChEBI" id="CHEBI:15379"/>
        <dbReference type="ChEBI" id="CHEBI:17499"/>
        <dbReference type="ChEBI" id="CHEBI:84167"/>
        <dbReference type="ChEBI" id="CHEBI:84422"/>
        <dbReference type="EC" id="1.14.99.60"/>
    </reaction>
</comment>
<comment type="cofactor">
    <cofactor evidence="1">
        <name>Fe cation</name>
        <dbReference type="ChEBI" id="CHEBI:24875"/>
    </cofactor>
    <text evidence="1">Binds 2 iron ions per subunit.</text>
</comment>
<comment type="pathway">
    <text evidence="1">Cofactor biosynthesis; ubiquinone biosynthesis.</text>
</comment>
<comment type="subcellular location">
    <subcellularLocation>
        <location evidence="1">Cell membrane</location>
        <topology evidence="1">Peripheral membrane protein</topology>
    </subcellularLocation>
</comment>
<comment type="similarity">
    <text evidence="1">Belongs to the COQ7 family.</text>
</comment>
<sequence length="208" mass="22561">MVFDELITEFDRGLRSIAGVSRMSRPVPKPAAAAPAELSAAERKHAAGLMRVNHVGEVCAQALYQAQKLTTSSAGLKEMFEHAAREEEDHLAWTAHRLKDLDSRPSLLNPLWYAGALAIGVVAGRLGDKVSLGFMAETERQVESHLDGHLSELPAADVESRAIVEQMRADEVKHGKSATDAGGIELPMPARMLMRAASKVMTSTAYYL</sequence>
<gene>
    <name evidence="1" type="primary">coq7</name>
    <name type="ordered locus">BURPS668_3535</name>
</gene>
<protein>
    <recommendedName>
        <fullName evidence="1">3-demethoxyubiquinol 3-hydroxylase</fullName>
        <shortName evidence="1">DMQ hydroxylase</shortName>
        <ecNumber evidence="1">1.14.99.60</ecNumber>
    </recommendedName>
    <alternativeName>
        <fullName evidence="1">2-nonaprenyl-3-methyl-6-methoxy-1,4-benzoquinol hydroxylase</fullName>
    </alternativeName>
</protein>
<accession>A3NDX4</accession>
<dbReference type="EC" id="1.14.99.60" evidence="1"/>
<dbReference type="EMBL" id="CP000570">
    <property type="protein sequence ID" value="ABN83577.1"/>
    <property type="molecule type" value="Genomic_DNA"/>
</dbReference>
<dbReference type="RefSeq" id="WP_009980961.1">
    <property type="nucleotide sequence ID" value="NC_009074.1"/>
</dbReference>
<dbReference type="SMR" id="A3NDX4"/>
<dbReference type="KEGG" id="bpd:BURPS668_3535"/>
<dbReference type="HOGENOM" id="CLU_088601_0_0_4"/>
<dbReference type="UniPathway" id="UPA00232"/>
<dbReference type="GO" id="GO:0005886">
    <property type="term" value="C:plasma membrane"/>
    <property type="evidence" value="ECO:0007669"/>
    <property type="project" value="UniProtKB-SubCell"/>
</dbReference>
<dbReference type="GO" id="GO:0008682">
    <property type="term" value="F:3-demethoxyubiquinol 3-hydroxylase activity"/>
    <property type="evidence" value="ECO:0007669"/>
    <property type="project" value="UniProtKB-EC"/>
</dbReference>
<dbReference type="GO" id="GO:0046872">
    <property type="term" value="F:metal ion binding"/>
    <property type="evidence" value="ECO:0007669"/>
    <property type="project" value="UniProtKB-KW"/>
</dbReference>
<dbReference type="GO" id="GO:0006744">
    <property type="term" value="P:ubiquinone biosynthetic process"/>
    <property type="evidence" value="ECO:0007669"/>
    <property type="project" value="UniProtKB-UniRule"/>
</dbReference>
<dbReference type="CDD" id="cd01042">
    <property type="entry name" value="DMQH"/>
    <property type="match status" value="1"/>
</dbReference>
<dbReference type="Gene3D" id="1.20.1260.10">
    <property type="match status" value="1"/>
</dbReference>
<dbReference type="HAMAP" id="MF_01658">
    <property type="entry name" value="COQ7"/>
    <property type="match status" value="1"/>
</dbReference>
<dbReference type="InterPro" id="IPR047809">
    <property type="entry name" value="COQ7_proteobact"/>
</dbReference>
<dbReference type="InterPro" id="IPR012347">
    <property type="entry name" value="Ferritin-like"/>
</dbReference>
<dbReference type="InterPro" id="IPR009078">
    <property type="entry name" value="Ferritin-like_SF"/>
</dbReference>
<dbReference type="InterPro" id="IPR011566">
    <property type="entry name" value="Ubq_synth_Coq7"/>
</dbReference>
<dbReference type="NCBIfam" id="NF033656">
    <property type="entry name" value="DMQ_monoox_COQ7"/>
    <property type="match status" value="1"/>
</dbReference>
<dbReference type="PANTHER" id="PTHR11237:SF4">
    <property type="entry name" value="5-DEMETHOXYUBIQUINONE HYDROXYLASE, MITOCHONDRIAL"/>
    <property type="match status" value="1"/>
</dbReference>
<dbReference type="PANTHER" id="PTHR11237">
    <property type="entry name" value="COENZYME Q10 BIOSYNTHESIS PROTEIN 7"/>
    <property type="match status" value="1"/>
</dbReference>
<dbReference type="Pfam" id="PF03232">
    <property type="entry name" value="COQ7"/>
    <property type="match status" value="1"/>
</dbReference>
<dbReference type="SUPFAM" id="SSF47240">
    <property type="entry name" value="Ferritin-like"/>
    <property type="match status" value="1"/>
</dbReference>
<name>COQ7_BURP6</name>
<organism>
    <name type="scientific">Burkholderia pseudomallei (strain 668)</name>
    <dbReference type="NCBI Taxonomy" id="320373"/>
    <lineage>
        <taxon>Bacteria</taxon>
        <taxon>Pseudomonadati</taxon>
        <taxon>Pseudomonadota</taxon>
        <taxon>Betaproteobacteria</taxon>
        <taxon>Burkholderiales</taxon>
        <taxon>Burkholderiaceae</taxon>
        <taxon>Burkholderia</taxon>
        <taxon>pseudomallei group</taxon>
    </lineage>
</organism>
<proteinExistence type="inferred from homology"/>
<reference key="1">
    <citation type="journal article" date="2010" name="Genome Biol. Evol.">
        <title>Continuing evolution of Burkholderia mallei through genome reduction and large-scale rearrangements.</title>
        <authorList>
            <person name="Losada L."/>
            <person name="Ronning C.M."/>
            <person name="DeShazer D."/>
            <person name="Woods D."/>
            <person name="Fedorova N."/>
            <person name="Kim H.S."/>
            <person name="Shabalina S.A."/>
            <person name="Pearson T.R."/>
            <person name="Brinkac L."/>
            <person name="Tan P."/>
            <person name="Nandi T."/>
            <person name="Crabtree J."/>
            <person name="Badger J."/>
            <person name="Beckstrom-Sternberg S."/>
            <person name="Saqib M."/>
            <person name="Schutzer S.E."/>
            <person name="Keim P."/>
            <person name="Nierman W.C."/>
        </authorList>
    </citation>
    <scope>NUCLEOTIDE SEQUENCE [LARGE SCALE GENOMIC DNA]</scope>
    <source>
        <strain>668</strain>
    </source>
</reference>
<feature type="chain" id="PRO_0000338673" description="3-demethoxyubiquinol 3-hydroxylase">
    <location>
        <begin position="1"/>
        <end position="208"/>
    </location>
</feature>
<feature type="binding site" evidence="1">
    <location>
        <position position="57"/>
    </location>
    <ligand>
        <name>Fe cation</name>
        <dbReference type="ChEBI" id="CHEBI:24875"/>
        <label>1</label>
    </ligand>
</feature>
<feature type="binding site" evidence="1">
    <location>
        <position position="87"/>
    </location>
    <ligand>
        <name>Fe cation</name>
        <dbReference type="ChEBI" id="CHEBI:24875"/>
        <label>1</label>
    </ligand>
</feature>
<feature type="binding site" evidence="1">
    <location>
        <position position="87"/>
    </location>
    <ligand>
        <name>Fe cation</name>
        <dbReference type="ChEBI" id="CHEBI:24875"/>
        <label>2</label>
    </ligand>
</feature>
<feature type="binding site" evidence="1">
    <location>
        <position position="90"/>
    </location>
    <ligand>
        <name>Fe cation</name>
        <dbReference type="ChEBI" id="CHEBI:24875"/>
        <label>1</label>
    </ligand>
</feature>
<feature type="binding site" evidence="1">
    <location>
        <position position="139"/>
    </location>
    <ligand>
        <name>Fe cation</name>
        <dbReference type="ChEBI" id="CHEBI:24875"/>
        <label>2</label>
    </ligand>
</feature>
<feature type="binding site" evidence="1">
    <location>
        <position position="171"/>
    </location>
    <ligand>
        <name>Fe cation</name>
        <dbReference type="ChEBI" id="CHEBI:24875"/>
        <label>1</label>
    </ligand>
</feature>
<feature type="binding site" evidence="1">
    <location>
        <position position="171"/>
    </location>
    <ligand>
        <name>Fe cation</name>
        <dbReference type="ChEBI" id="CHEBI:24875"/>
        <label>2</label>
    </ligand>
</feature>
<feature type="binding site" evidence="1">
    <location>
        <position position="174"/>
    </location>
    <ligand>
        <name>Fe cation</name>
        <dbReference type="ChEBI" id="CHEBI:24875"/>
        <label>2</label>
    </ligand>
</feature>
<keyword id="KW-1003">Cell membrane</keyword>
<keyword id="KW-0408">Iron</keyword>
<keyword id="KW-0472">Membrane</keyword>
<keyword id="KW-0479">Metal-binding</keyword>
<keyword id="KW-0503">Monooxygenase</keyword>
<keyword id="KW-0560">Oxidoreductase</keyword>
<keyword id="KW-0831">Ubiquinone biosynthesis</keyword>